<organism>
    <name type="scientific">Penicillium aethiopicum</name>
    <dbReference type="NCBI Taxonomy" id="36650"/>
    <lineage>
        <taxon>Eukaryota</taxon>
        <taxon>Fungi</taxon>
        <taxon>Dikarya</taxon>
        <taxon>Ascomycota</taxon>
        <taxon>Pezizomycotina</taxon>
        <taxon>Eurotiomycetes</taxon>
        <taxon>Eurotiomycetidae</taxon>
        <taxon>Eurotiales</taxon>
        <taxon>Aspergillaceae</taxon>
        <taxon>Penicillium</taxon>
    </lineage>
</organism>
<name>VRTR2_PENAE</name>
<dbReference type="EMBL" id="GU574477">
    <property type="protein sequence ID" value="ADI24939.1"/>
    <property type="molecule type" value="Genomic_DNA"/>
</dbReference>
<dbReference type="SMR" id="D7PHY7"/>
<dbReference type="GO" id="GO:0005634">
    <property type="term" value="C:nucleus"/>
    <property type="evidence" value="ECO:0007669"/>
    <property type="project" value="UniProtKB-SubCell"/>
</dbReference>
<dbReference type="GO" id="GO:0003677">
    <property type="term" value="F:DNA binding"/>
    <property type="evidence" value="ECO:0007669"/>
    <property type="project" value="UniProtKB-KW"/>
</dbReference>
<dbReference type="GO" id="GO:0000981">
    <property type="term" value="F:DNA-binding transcription factor activity, RNA polymerase II-specific"/>
    <property type="evidence" value="ECO:0007669"/>
    <property type="project" value="InterPro"/>
</dbReference>
<dbReference type="GO" id="GO:0008270">
    <property type="term" value="F:zinc ion binding"/>
    <property type="evidence" value="ECO:0007669"/>
    <property type="project" value="InterPro"/>
</dbReference>
<dbReference type="GO" id="GO:0006351">
    <property type="term" value="P:DNA-templated transcription"/>
    <property type="evidence" value="ECO:0007669"/>
    <property type="project" value="InterPro"/>
</dbReference>
<dbReference type="CDD" id="cd12148">
    <property type="entry name" value="fungal_TF_MHR"/>
    <property type="match status" value="1"/>
</dbReference>
<dbReference type="CDD" id="cd00067">
    <property type="entry name" value="GAL4"/>
    <property type="match status" value="1"/>
</dbReference>
<dbReference type="Gene3D" id="4.10.240.10">
    <property type="entry name" value="Zn(2)-C6 fungal-type DNA-binding domain"/>
    <property type="match status" value="1"/>
</dbReference>
<dbReference type="InterPro" id="IPR050613">
    <property type="entry name" value="Sec_Metabolite_Reg"/>
</dbReference>
<dbReference type="InterPro" id="IPR007219">
    <property type="entry name" value="Transcription_factor_dom_fun"/>
</dbReference>
<dbReference type="InterPro" id="IPR036864">
    <property type="entry name" value="Zn2-C6_fun-type_DNA-bd_sf"/>
</dbReference>
<dbReference type="InterPro" id="IPR001138">
    <property type="entry name" value="Zn2Cys6_DnaBD"/>
</dbReference>
<dbReference type="PANTHER" id="PTHR31001">
    <property type="entry name" value="UNCHARACTERIZED TRANSCRIPTIONAL REGULATORY PROTEIN"/>
    <property type="match status" value="1"/>
</dbReference>
<dbReference type="PANTHER" id="PTHR31001:SF50">
    <property type="entry name" value="ZN(II)2CYS6 TRANSCRIPTION FACTOR (EUROFUNG)"/>
    <property type="match status" value="1"/>
</dbReference>
<dbReference type="Pfam" id="PF04082">
    <property type="entry name" value="Fungal_trans"/>
    <property type="match status" value="1"/>
</dbReference>
<dbReference type="Pfam" id="PF00172">
    <property type="entry name" value="Zn_clus"/>
    <property type="match status" value="1"/>
</dbReference>
<dbReference type="SMART" id="SM00906">
    <property type="entry name" value="Fungal_trans"/>
    <property type="match status" value="1"/>
</dbReference>
<dbReference type="SMART" id="SM00066">
    <property type="entry name" value="GAL4"/>
    <property type="match status" value="1"/>
</dbReference>
<dbReference type="SUPFAM" id="SSF57701">
    <property type="entry name" value="Zn2/Cys6 DNA-binding domain"/>
    <property type="match status" value="1"/>
</dbReference>
<dbReference type="PROSITE" id="PS00463">
    <property type="entry name" value="ZN2_CY6_FUNGAL_1"/>
    <property type="match status" value="1"/>
</dbReference>
<dbReference type="PROSITE" id="PS50048">
    <property type="entry name" value="ZN2_CY6_FUNGAL_2"/>
    <property type="match status" value="1"/>
</dbReference>
<feature type="chain" id="PRO_0000436818" description="Transcription factor vrtR2">
    <location>
        <begin position="1"/>
        <end position="836"/>
    </location>
</feature>
<feature type="DNA-binding region" description="Zn(2)-C6 fungal-type" evidence="1">
    <location>
        <begin position="37"/>
        <end position="63"/>
    </location>
</feature>
<feature type="region of interest" description="Disordered" evidence="2">
    <location>
        <begin position="1"/>
        <end position="29"/>
    </location>
</feature>
<feature type="region of interest" description="Disordered" evidence="2">
    <location>
        <begin position="72"/>
        <end position="114"/>
    </location>
</feature>
<feature type="compositionally biased region" description="Polar residues" evidence="2">
    <location>
        <begin position="1"/>
        <end position="26"/>
    </location>
</feature>
<feature type="compositionally biased region" description="Polar residues" evidence="2">
    <location>
        <begin position="79"/>
        <end position="88"/>
    </location>
</feature>
<sequence length="836" mass="92125">MPSLSSKTSTMQRSCRPQMSACPNQQQKDRPVPQLSCVLCRDRKLKCDKLDPCSNCTSSGVACTPIYRPRLPRGRHARTVQTKASTPPDTRRRGSSNESTTAPAPDDGGLGTHIDQLDNLVQDREVSKLGLSGEGNGLQELISLVSDETMPATAWSTHCFGTISRILSSRIRRLESLVQETARIQTPKRARKPMTPVVVQWYSAPLAGCNWNRMVVQTPQGLEVQQFPAPPTSYSARRSPELSGNDIWADLMDHDMHDPPQYNALELPPDLTNEGGVDNMGSSGRDDPINNGFNALRLLGINNSLSPSFISLPRDRLSASKLCQVYLQNVDPIIKILHRPSLSRWMVDGAPTYLGSSEDDYAVKALESAVCYTAANTMTEHQCQAAFQKTKSSIMAVRRKMCEDALENAGLLTTRDMTVLQAFILYLVTPTDLSKIGRRSEDKDTAVWALVALAIRLIKAMGLNQEPSEGARKGESFFQQQLRLRLWLTACLIDLQASFAQATDPLITHRDAACAVPYVANINDSDFDVDTAHPVASHEELTDTTFALVTYRVQVAGRLFNFGPGCSTAAERHKLAQEVQQQVFTLLHYCDPESSSYAWFTWHSTQSIIFAVRLSELLPFRCGQPGGHVPPPSPRAEGDTTLLWRALQNLEKAQLIRADPRGDGFRWYITTPWLALSTAISECNSCTDVALVCRAWPVIEISYRQHEELQISDECQLPQGPLVHLMNKTREKLAPLLQEGGARLSDSQTVDRASADSLQPPVPVGSIPIDPLLTNGSLGADTAMSEASSIGSLPPFEQQCWKQMTMPTDGAPVRDGVVFTSELYNPLQSDFLNSHG</sequence>
<gene>
    <name evidence="6" type="primary">vrtR2</name>
</gene>
<proteinExistence type="evidence at protein level"/>
<accession>D7PHY7</accession>
<evidence type="ECO:0000255" key="1">
    <source>
        <dbReference type="PROSITE-ProRule" id="PRU00227"/>
    </source>
</evidence>
<evidence type="ECO:0000256" key="2">
    <source>
        <dbReference type="SAM" id="MobiDB-lite"/>
    </source>
</evidence>
<evidence type="ECO:0000269" key="3">
    <source>
    </source>
</evidence>
<evidence type="ECO:0000269" key="4">
    <source>
    </source>
</evidence>
<evidence type="ECO:0000269" key="5">
    <source>
    </source>
</evidence>
<evidence type="ECO:0000303" key="6">
    <source>
    </source>
</evidence>
<comment type="function">
    <text evidence="4">Probable transcription factor that regulates expression of the gene cluster that mediates the biosynthesis of viridicatumtoxin, a tetracycline-like fungal meroterpenoid with a unique, fused spirobicyclic ring system (PubMed:20534346).</text>
</comment>
<comment type="subcellular location">
    <subcellularLocation>
        <location evidence="1">Nucleus</location>
    </subcellularLocation>
</comment>
<comment type="biotechnology">
    <text evidence="3 5">Viridicatumtoxin and its derivative, viridicatumtoxin B, exhibit anti-methicillin-resistant Staphylococcus aureus (anti-MRSA) activity (PubMed:19168978). Moreover, viridicatumtoxin and a C2 acetyl analog, spirohexaline, have been demonstrated to inhibit bacterial undecaprenyl diphosphate synthase, a potential new target for antibiotic development (PubMed:27049441).</text>
</comment>
<protein>
    <recommendedName>
        <fullName evidence="6">Transcription factor vrtR2</fullName>
    </recommendedName>
    <alternativeName>
        <fullName evidence="6">Viridicatumtoxin synthesis protein R2</fullName>
    </alternativeName>
</protein>
<keyword id="KW-0238">DNA-binding</keyword>
<keyword id="KW-0479">Metal-binding</keyword>
<keyword id="KW-0539">Nucleus</keyword>
<keyword id="KW-0804">Transcription</keyword>
<keyword id="KW-0805">Transcription regulation</keyword>
<keyword id="KW-0862">Zinc</keyword>
<reference key="1">
    <citation type="journal article" date="2010" name="Chem. Biol.">
        <title>Identification of the viridicatumtoxin and griseofulvin gene clusters from Penicillium aethiopicum.</title>
        <authorList>
            <person name="Chooi Y.H."/>
            <person name="Cacho R."/>
            <person name="Tang Y."/>
        </authorList>
    </citation>
    <scope>NUCLEOTIDE SEQUENCE [GENOMIC DNA]</scope>
    <scope>FUNCTION</scope>
    <source>
        <strain>IBT 5753</strain>
    </source>
</reference>
<reference key="2">
    <citation type="journal article" date="2008" name="J. Antibiot.">
        <title>Viridicatumtoxin B, a new anti-MRSA agent from Penicillium sp. FR11.</title>
        <authorList>
            <person name="Zheng C.J."/>
            <person name="Yu H.E."/>
            <person name="Kim E.H."/>
            <person name="Kim W.G."/>
        </authorList>
    </citation>
    <scope>BIOTECHNOLOGY</scope>
</reference>
<reference key="3">
    <citation type="journal article" date="2016" name="J. Antibiot.">
        <title>Inhibition of bacterial undecaprenyl pyrophosphate synthase by small fungal molecules.</title>
        <authorList>
            <person name="Inokoshi J."/>
            <person name="Nakamura Y."/>
            <person name="Komada S."/>
            <person name="Komatsu K."/>
            <person name="Umeyama H."/>
            <person name="Tomoda H."/>
        </authorList>
    </citation>
    <scope>BIOTECHNOLOGY</scope>
</reference>